<gene>
    <name evidence="1" type="primary">ribH</name>
    <name type="ordered locus">CCA_00894</name>
</gene>
<reference key="1">
    <citation type="journal article" date="2003" name="Nucleic Acids Res.">
        <title>Genome sequence of Chlamydophila caviae (Chlamydia psittaci GPIC): examining the role of niche-specific genes in the evolution of the Chlamydiaceae.</title>
        <authorList>
            <person name="Read T.D."/>
            <person name="Myers G.S.A."/>
            <person name="Brunham R.C."/>
            <person name="Nelson W.C."/>
            <person name="Paulsen I.T."/>
            <person name="Heidelberg J.F."/>
            <person name="Holtzapple E.K."/>
            <person name="Khouri H.M."/>
            <person name="Federova N.B."/>
            <person name="Carty H.A."/>
            <person name="Umayam L.A."/>
            <person name="Haft D.H."/>
            <person name="Peterson J.D."/>
            <person name="Beanan M.J."/>
            <person name="White O."/>
            <person name="Salzberg S.L."/>
            <person name="Hsia R.-C."/>
            <person name="McClarty G."/>
            <person name="Rank R.G."/>
            <person name="Bavoil P.M."/>
            <person name="Fraser C.M."/>
        </authorList>
    </citation>
    <scope>NUCLEOTIDE SEQUENCE [LARGE SCALE GENOMIC DNA]</scope>
    <source>
        <strain>ATCC VR-813 / DSM 19441 / 03DC25 / GPIC</strain>
    </source>
</reference>
<feature type="chain" id="PRO_0000134737" description="6,7-dimethyl-8-ribityllumazine synthase">
    <location>
        <begin position="1"/>
        <end position="154"/>
    </location>
</feature>
<feature type="active site" description="Proton donor" evidence="1">
    <location>
        <position position="89"/>
    </location>
</feature>
<feature type="binding site" evidence="1">
    <location>
        <position position="22"/>
    </location>
    <ligand>
        <name>5-amino-6-(D-ribitylamino)uracil</name>
        <dbReference type="ChEBI" id="CHEBI:15934"/>
    </ligand>
</feature>
<feature type="binding site" evidence="1">
    <location>
        <begin position="56"/>
        <end position="58"/>
    </location>
    <ligand>
        <name>5-amino-6-(D-ribitylamino)uracil</name>
        <dbReference type="ChEBI" id="CHEBI:15934"/>
    </ligand>
</feature>
<feature type="binding site" evidence="1">
    <location>
        <begin position="81"/>
        <end position="83"/>
    </location>
    <ligand>
        <name>5-amino-6-(D-ribitylamino)uracil</name>
        <dbReference type="ChEBI" id="CHEBI:15934"/>
    </ligand>
</feature>
<feature type="binding site" evidence="1">
    <location>
        <begin position="86"/>
        <end position="87"/>
    </location>
    <ligand>
        <name>(2S)-2-hydroxy-3-oxobutyl phosphate</name>
        <dbReference type="ChEBI" id="CHEBI:58830"/>
    </ligand>
</feature>
<feature type="binding site" evidence="1">
    <location>
        <position position="114"/>
    </location>
    <ligand>
        <name>5-amino-6-(D-ribitylamino)uracil</name>
        <dbReference type="ChEBI" id="CHEBI:15934"/>
    </ligand>
</feature>
<feature type="binding site" evidence="1">
    <location>
        <position position="128"/>
    </location>
    <ligand>
        <name>(2S)-2-hydroxy-3-oxobutyl phosphate</name>
        <dbReference type="ChEBI" id="CHEBI:58830"/>
    </ligand>
</feature>
<keyword id="KW-0686">Riboflavin biosynthesis</keyword>
<keyword id="KW-0808">Transferase</keyword>
<protein>
    <recommendedName>
        <fullName evidence="1">6,7-dimethyl-8-ribityllumazine synthase</fullName>
        <shortName evidence="1">DMRL synthase</shortName>
        <shortName evidence="1">LS</shortName>
        <shortName evidence="1">Lumazine synthase</shortName>
        <ecNumber evidence="1">2.5.1.78</ecNumber>
    </recommendedName>
</protein>
<accession>Q821P5</accession>
<organism>
    <name type="scientific">Chlamydia caviae (strain ATCC VR-813 / DSM 19441 / 03DC25 / GPIC)</name>
    <name type="common">Chlamydophila caviae</name>
    <dbReference type="NCBI Taxonomy" id="227941"/>
    <lineage>
        <taxon>Bacteria</taxon>
        <taxon>Pseudomonadati</taxon>
        <taxon>Chlamydiota</taxon>
        <taxon>Chlamydiia</taxon>
        <taxon>Chlamydiales</taxon>
        <taxon>Chlamydiaceae</taxon>
        <taxon>Chlamydia/Chlamydophila group</taxon>
        <taxon>Chlamydia</taxon>
    </lineage>
</organism>
<dbReference type="EC" id="2.5.1.78" evidence="1"/>
<dbReference type="EMBL" id="AE015925">
    <property type="protein sequence ID" value="AAP05634.1"/>
    <property type="molecule type" value="Genomic_DNA"/>
</dbReference>
<dbReference type="RefSeq" id="WP_011006848.1">
    <property type="nucleotide sequence ID" value="NC_003361.3"/>
</dbReference>
<dbReference type="SMR" id="Q821P5"/>
<dbReference type="STRING" id="227941.CCA_00894"/>
<dbReference type="KEGG" id="cca:CCA_00894"/>
<dbReference type="eggNOG" id="COG0054">
    <property type="taxonomic scope" value="Bacteria"/>
</dbReference>
<dbReference type="HOGENOM" id="CLU_089358_1_1_0"/>
<dbReference type="OrthoDB" id="9809709at2"/>
<dbReference type="UniPathway" id="UPA00275">
    <property type="reaction ID" value="UER00404"/>
</dbReference>
<dbReference type="Proteomes" id="UP000002193">
    <property type="component" value="Chromosome"/>
</dbReference>
<dbReference type="GO" id="GO:0005829">
    <property type="term" value="C:cytosol"/>
    <property type="evidence" value="ECO:0007669"/>
    <property type="project" value="TreeGrafter"/>
</dbReference>
<dbReference type="GO" id="GO:0009349">
    <property type="term" value="C:riboflavin synthase complex"/>
    <property type="evidence" value="ECO:0007669"/>
    <property type="project" value="InterPro"/>
</dbReference>
<dbReference type="GO" id="GO:0000906">
    <property type="term" value="F:6,7-dimethyl-8-ribityllumazine synthase activity"/>
    <property type="evidence" value="ECO:0007669"/>
    <property type="project" value="UniProtKB-UniRule"/>
</dbReference>
<dbReference type="GO" id="GO:0009231">
    <property type="term" value="P:riboflavin biosynthetic process"/>
    <property type="evidence" value="ECO:0007669"/>
    <property type="project" value="UniProtKB-UniRule"/>
</dbReference>
<dbReference type="CDD" id="cd09209">
    <property type="entry name" value="Lumazine_synthase-I"/>
    <property type="match status" value="1"/>
</dbReference>
<dbReference type="Gene3D" id="3.40.50.960">
    <property type="entry name" value="Lumazine/riboflavin synthase"/>
    <property type="match status" value="1"/>
</dbReference>
<dbReference type="HAMAP" id="MF_00178">
    <property type="entry name" value="Lumazine_synth"/>
    <property type="match status" value="1"/>
</dbReference>
<dbReference type="InterPro" id="IPR034964">
    <property type="entry name" value="LS"/>
</dbReference>
<dbReference type="InterPro" id="IPR002180">
    <property type="entry name" value="LS/RS"/>
</dbReference>
<dbReference type="InterPro" id="IPR036467">
    <property type="entry name" value="LS/RS_sf"/>
</dbReference>
<dbReference type="NCBIfam" id="TIGR00114">
    <property type="entry name" value="lumazine-synth"/>
    <property type="match status" value="1"/>
</dbReference>
<dbReference type="PANTHER" id="PTHR21058:SF0">
    <property type="entry name" value="6,7-DIMETHYL-8-RIBITYLLUMAZINE SYNTHASE"/>
    <property type="match status" value="1"/>
</dbReference>
<dbReference type="PANTHER" id="PTHR21058">
    <property type="entry name" value="6,7-DIMETHYL-8-RIBITYLLUMAZINE SYNTHASE DMRL SYNTHASE LUMAZINE SYNTHASE"/>
    <property type="match status" value="1"/>
</dbReference>
<dbReference type="Pfam" id="PF00885">
    <property type="entry name" value="DMRL_synthase"/>
    <property type="match status" value="1"/>
</dbReference>
<dbReference type="SUPFAM" id="SSF52121">
    <property type="entry name" value="Lumazine synthase"/>
    <property type="match status" value="1"/>
</dbReference>
<sequence length="154" mass="16310">MKTFKGVASAKDMRVAIVGACFNGPIADALVSGAQQTFLDLGGAEDMLTVVRVPGSFEIPCTLKKLLTSGVKYDAIVACGVLIKGETTHYDHIADQVSARISELSLEFNLPITFSVITAPCIDSAWQRAGIKGSNLGISGMKTALEMADLFKKL</sequence>
<evidence type="ECO:0000255" key="1">
    <source>
        <dbReference type="HAMAP-Rule" id="MF_00178"/>
    </source>
</evidence>
<name>RISB_CHLCV</name>
<comment type="function">
    <text evidence="1">Catalyzes the formation of 6,7-dimethyl-8-ribityllumazine by condensation of 5-amino-6-(D-ribitylamino)uracil with 3,4-dihydroxy-2-butanone 4-phosphate. This is the penultimate step in the biosynthesis of riboflavin.</text>
</comment>
<comment type="catalytic activity">
    <reaction evidence="1">
        <text>(2S)-2-hydroxy-3-oxobutyl phosphate + 5-amino-6-(D-ribitylamino)uracil = 6,7-dimethyl-8-(1-D-ribityl)lumazine + phosphate + 2 H2O + H(+)</text>
        <dbReference type="Rhea" id="RHEA:26152"/>
        <dbReference type="ChEBI" id="CHEBI:15377"/>
        <dbReference type="ChEBI" id="CHEBI:15378"/>
        <dbReference type="ChEBI" id="CHEBI:15934"/>
        <dbReference type="ChEBI" id="CHEBI:43474"/>
        <dbReference type="ChEBI" id="CHEBI:58201"/>
        <dbReference type="ChEBI" id="CHEBI:58830"/>
        <dbReference type="EC" id="2.5.1.78"/>
    </reaction>
</comment>
<comment type="pathway">
    <text evidence="1">Cofactor biosynthesis; riboflavin biosynthesis; riboflavin from 2-hydroxy-3-oxobutyl phosphate and 5-amino-6-(D-ribitylamino)uracil: step 1/2.</text>
</comment>
<comment type="similarity">
    <text evidence="1">Belongs to the DMRL synthase family.</text>
</comment>
<proteinExistence type="inferred from homology"/>